<sequence length="218" mass="24650">MGTLLALVVGAALVSSAWGGCVEVDSDTEAVYGMTFKILCISCKRRSETTAETFTEWTFRQKGTEEFVKILRYENEVLQLEEDERFEGRVVWNGSRGTKDLQDLSIFITNVTYNHSGDYECHVYRLLFFDNYEHNTSVVKKIHLEVVDKANRDMASIVSEIMMYVLIVVLTIWLVAEMVYCYKKIAAATEAAAQENASEYLAITSESKENCTGVQVAE</sequence>
<keyword id="KW-1003">Cell membrane</keyword>
<keyword id="KW-0966">Cell projection</keyword>
<keyword id="KW-1015">Disulfide bond</keyword>
<keyword id="KW-0325">Glycoprotein</keyword>
<keyword id="KW-0393">Immunoglobulin domain</keyword>
<keyword id="KW-0406">Ion transport</keyword>
<keyword id="KW-0472">Membrane</keyword>
<keyword id="KW-1185">Reference proteome</keyword>
<keyword id="KW-0732">Signal</keyword>
<keyword id="KW-0915">Sodium</keyword>
<keyword id="KW-0739">Sodium transport</keyword>
<keyword id="KW-0812">Transmembrane</keyword>
<keyword id="KW-1133">Transmembrane helix</keyword>
<keyword id="KW-0813">Transport</keyword>
<accession>P97952</accession>
<comment type="function">
    <text evidence="2">Regulatory subunit of multiple voltage-gated sodium (Nav) channels directly mediating the depolarization of excitable membranes. Navs, also called VGSCs (voltage-gated sodium channels) or VDSCs (voltage-dependent sodium channels), operate by switching between closed and open conformations depending on the voltage difference across the membrane. In the open conformation they allow Na(+) ions to selectively pass through the pore, along their electrochemical gradient. The influx of Na+ ions provokes membrane depolarization, initiating the propagation of electrical signals throughout cells and tissues. The accessory beta subunits participate in localization and functional modulation of the Nav channels. Modulates the activity of SCN1A/Nav1.1, SCN2A/Nav1.2, SCN3A/Nav1.3, SCN4A/Nav1.4, SCN5A/Nav1.5, SCN8A/Nav1.6, SCN9A/Nav1.7 and SCN10A/Nav1.8.</text>
</comment>
<comment type="subunit">
    <text evidence="1 2 5">A voltage-gated sodium (Nav) channel consists of an ion-conducting pore-forming alpha subunit functional on its own that is regulated by one or more beta subunits (By similarity). Interacts with SCN1A; regulatory subunit of SCN1A/Nav1.1 (By similarity). Interacts with SCN3A; regulatory subunit of SCN3A/Nav1.3 (By similarity). Interacts with SCN4A; regulatory subunit of SCN4A/Nav1.4 (By similarity). Interacts with SCN5A; regulatory subunit of SCN5A/Nav1.5 (By similarity). Interacts with SCN8A; regulatory subunit of SCN8A/Nav1.6 (By similarity). Interacts with SCN9A; regulatory subunit of SCN9A/Nav1.7 (By similarity). Interacts with SCN10A; regulatory subunit of SCN10A/Nav1.8 (By similarity). Interacts with NFASC (By similarity). Interacts with TMEM65.</text>
</comment>
<comment type="subcellular location">
    <subcellularLocation>
        <location evidence="4">Cell membrane</location>
        <topology evidence="2">Single-pass type I membrane protein</topology>
    </subcellularLocation>
    <subcellularLocation>
        <location evidence="4">Perikaryon</location>
    </subcellularLocation>
    <subcellularLocation>
        <location evidence="4">Cell projection</location>
    </subcellularLocation>
    <subcellularLocation>
        <location evidence="1">Cell projection</location>
        <location evidence="1">Axon</location>
    </subcellularLocation>
    <text evidence="4">Detected at nodes of Ranvier on the sciatic nerve.</text>
</comment>
<comment type="tissue specificity">
    <text evidence="4 6">Detected in hippocampus CA3 bipolar neurons (at protein level) (PubMed:19710327). Detected in skeletal muscle (PubMed:9013777).</text>
</comment>
<comment type="similarity">
    <text evidence="7">Belongs to the sodium channel auxiliary subunit SCN1B (TC 8.A.17) family.</text>
</comment>
<feature type="signal peptide" evidence="1">
    <location>
        <begin position="1"/>
        <end position="18"/>
    </location>
</feature>
<feature type="chain" id="PRO_0000014927" description="Sodium channel regulatory subunit beta-1">
    <location>
        <begin position="19"/>
        <end position="218"/>
    </location>
</feature>
<feature type="topological domain" description="Extracellular" evidence="7">
    <location>
        <begin position="19"/>
        <end position="157"/>
    </location>
</feature>
<feature type="transmembrane region" description="Helical" evidence="2">
    <location>
        <begin position="158"/>
        <end position="179"/>
    </location>
</feature>
<feature type="topological domain" description="Cytoplasmic" evidence="7">
    <location>
        <begin position="180"/>
        <end position="218"/>
    </location>
</feature>
<feature type="domain" description="Ig-like C2-type">
    <location>
        <begin position="22"/>
        <end position="150"/>
    </location>
</feature>
<feature type="glycosylation site" description="N-linked (GlcNAc...) asparagine" evidence="3">
    <location>
        <position position="93"/>
    </location>
</feature>
<feature type="glycosylation site" description="N-linked (GlcNAc...) asparagine" evidence="3">
    <location>
        <position position="110"/>
    </location>
</feature>
<feature type="glycosylation site" description="N-linked (GlcNAc...) asparagine" evidence="3">
    <location>
        <position position="114"/>
    </location>
</feature>
<feature type="glycosylation site" description="N-linked (GlcNAc...) asparagine" evidence="3">
    <location>
        <position position="135"/>
    </location>
</feature>
<feature type="disulfide bond" evidence="2">
    <location>
        <begin position="21"/>
        <end position="43"/>
    </location>
</feature>
<feature type="disulfide bond" evidence="2">
    <location>
        <begin position="40"/>
        <end position="121"/>
    </location>
</feature>
<reference key="1">
    <citation type="journal article" date="1996" name="Brain Res. Mol. Brain Res.">
        <title>Sequence of the voltage-gated sodium channel beta1-subunit in wild-type and in quivering mice.</title>
        <authorList>
            <person name="Grosson C.L.S."/>
            <person name="Cannon S.C."/>
            <person name="Corey D.P."/>
            <person name="Gusella J.F."/>
        </authorList>
    </citation>
    <scope>NUCLEOTIDE SEQUENCE [MRNA]</scope>
    <scope>TISSUE SPECIFICITY</scope>
    <source>
        <strain>C57BL/6J</strain>
        <tissue>Brain</tissue>
    </source>
</reference>
<reference key="2">
    <citation type="journal article" date="1998" name="Circ. Res.">
        <title>Modulation of cardiac Na+ current phenotype by beta1-subunit expression.</title>
        <authorList>
            <person name="Kupershmidt S."/>
            <person name="Yang T."/>
            <person name="Roden D.M."/>
        </authorList>
    </citation>
    <scope>NUCLEOTIDE SEQUENCE [MRNA]</scope>
</reference>
<reference key="3">
    <citation type="journal article" date="2004" name="Genome Res.">
        <title>The status, quality, and expansion of the NIH full-length cDNA project: the Mammalian Gene Collection (MGC).</title>
        <authorList>
            <consortium name="The MGC Project Team"/>
        </authorList>
    </citation>
    <scope>NUCLEOTIDE SEQUENCE [LARGE SCALE MRNA]</scope>
    <source>
        <strain>C57BL/6J</strain>
        <tissue>Mammary gland</tissue>
    </source>
</reference>
<reference key="4">
    <citation type="journal article" date="2009" name="J. Neurosci.">
        <title>A functional null mutation of SCN1B in a patient with Dravet syndrome.</title>
        <authorList>
            <person name="Patino G.A."/>
            <person name="Claes L.R."/>
            <person name="Lopez-Santiago L.F."/>
            <person name="Slat E.A."/>
            <person name="Dondeti R.S."/>
            <person name="Chen C."/>
            <person name="O'Malley H.A."/>
            <person name="Gray C.B."/>
            <person name="Miyazaki H."/>
            <person name="Nukina N."/>
            <person name="Oyama F."/>
            <person name="De Jonghe P."/>
            <person name="Isom L.L."/>
        </authorList>
    </citation>
    <scope>SUBCELLULAR LOCATION</scope>
</reference>
<reference key="5">
    <citation type="journal article" date="2010" name="Cell">
        <title>A tissue-specific atlas of mouse protein phosphorylation and expression.</title>
        <authorList>
            <person name="Huttlin E.L."/>
            <person name="Jedrychowski M.P."/>
            <person name="Elias J.E."/>
            <person name="Goswami T."/>
            <person name="Rad R."/>
            <person name="Beausoleil S.A."/>
            <person name="Villen J."/>
            <person name="Haas W."/>
            <person name="Sowa M.E."/>
            <person name="Gygi S.P."/>
        </authorList>
    </citation>
    <scope>IDENTIFICATION BY MASS SPECTROMETRY [LARGE SCALE ANALYSIS]</scope>
    <source>
        <tissue>Brain</tissue>
    </source>
</reference>
<reference key="6">
    <citation type="journal article" date="2022" name="Nat. Commun.">
        <title>Tmem65 is critical for the structure and function of the intercalated discs in mouse hearts.</title>
        <authorList>
            <person name="Teng A.C.T."/>
            <person name="Gu L."/>
            <person name="Di Paola M."/>
            <person name="Lakin R."/>
            <person name="Williams Z.J."/>
            <person name="Au A."/>
            <person name="Chen W."/>
            <person name="Callaghan N.I."/>
            <person name="Zadeh F.H."/>
            <person name="Zhou Y.Q."/>
            <person name="Fatah M."/>
            <person name="Chatterjee D."/>
            <person name="Jourdan L.J."/>
            <person name="Liu J."/>
            <person name="Simmons C.A."/>
            <person name="Kislinger T."/>
            <person name="Yip C.M."/>
            <person name="Backx P.H."/>
            <person name="Gourdie R.G."/>
            <person name="Hamilton R.M."/>
            <person name="Gramolini A.O."/>
        </authorList>
    </citation>
    <scope>INTERACTION WITH TMEM65</scope>
</reference>
<proteinExistence type="evidence at protein level"/>
<organism>
    <name type="scientific">Mus musculus</name>
    <name type="common">Mouse</name>
    <dbReference type="NCBI Taxonomy" id="10090"/>
    <lineage>
        <taxon>Eukaryota</taxon>
        <taxon>Metazoa</taxon>
        <taxon>Chordata</taxon>
        <taxon>Craniata</taxon>
        <taxon>Vertebrata</taxon>
        <taxon>Euteleostomi</taxon>
        <taxon>Mammalia</taxon>
        <taxon>Eutheria</taxon>
        <taxon>Euarchontoglires</taxon>
        <taxon>Glires</taxon>
        <taxon>Rodentia</taxon>
        <taxon>Myomorpha</taxon>
        <taxon>Muroidea</taxon>
        <taxon>Muridae</taxon>
        <taxon>Murinae</taxon>
        <taxon>Mus</taxon>
        <taxon>Mus</taxon>
    </lineage>
</organism>
<evidence type="ECO:0000250" key="1">
    <source>
        <dbReference type="UniProtKB" id="Q00954"/>
    </source>
</evidence>
<evidence type="ECO:0000250" key="2">
    <source>
        <dbReference type="UniProtKB" id="Q07699"/>
    </source>
</evidence>
<evidence type="ECO:0000255" key="3"/>
<evidence type="ECO:0000269" key="4">
    <source>
    </source>
</evidence>
<evidence type="ECO:0000269" key="5">
    <source>
    </source>
</evidence>
<evidence type="ECO:0000269" key="6">
    <source>
    </source>
</evidence>
<evidence type="ECO:0000305" key="7"/>
<evidence type="ECO:0000312" key="8">
    <source>
        <dbReference type="MGI" id="MGI:98247"/>
    </source>
</evidence>
<dbReference type="EMBL" id="U46681">
    <property type="protein sequence ID" value="AAC53006.1"/>
    <property type="molecule type" value="mRNA"/>
</dbReference>
<dbReference type="EMBL" id="U85786">
    <property type="protein sequence ID" value="AAB49368.1"/>
    <property type="molecule type" value="mRNA"/>
</dbReference>
<dbReference type="EMBL" id="BC009652">
    <property type="protein sequence ID" value="AAH09652.1"/>
    <property type="molecule type" value="mRNA"/>
</dbReference>
<dbReference type="EMBL" id="BC039140">
    <property type="protein sequence ID" value="AAH39140.1"/>
    <property type="molecule type" value="mRNA"/>
</dbReference>
<dbReference type="CCDS" id="CCDS21126.1"/>
<dbReference type="RefSeq" id="NP_035452.1">
    <property type="nucleotide sequence ID" value="NM_011322.4"/>
</dbReference>
<dbReference type="SMR" id="P97952"/>
<dbReference type="BioGRID" id="203099">
    <property type="interactions" value="1"/>
</dbReference>
<dbReference type="CORUM" id="P97952"/>
<dbReference type="FunCoup" id="P97952">
    <property type="interactions" value="618"/>
</dbReference>
<dbReference type="STRING" id="10090.ENSMUSP00000096148"/>
<dbReference type="BindingDB" id="P97952"/>
<dbReference type="ChEMBL" id="CHEMBL4630761"/>
<dbReference type="ChEMBL" id="CHEMBL4630764"/>
<dbReference type="ChEMBL" id="CHEMBL4630766"/>
<dbReference type="GlyConnect" id="2720">
    <property type="glycosylation" value="8 N-Linked glycans (2 sites)"/>
</dbReference>
<dbReference type="GlyCosmos" id="P97952">
    <property type="glycosylation" value="4 sites, 8 glycans"/>
</dbReference>
<dbReference type="GlyGen" id="P97952">
    <property type="glycosylation" value="4 sites, 11 N-linked glycans (3 sites)"/>
</dbReference>
<dbReference type="iPTMnet" id="P97952"/>
<dbReference type="PhosphoSitePlus" id="P97952"/>
<dbReference type="SwissPalm" id="P97952"/>
<dbReference type="jPOST" id="P97952"/>
<dbReference type="PaxDb" id="10090-ENSMUSP00000096148"/>
<dbReference type="PeptideAtlas" id="P97952"/>
<dbReference type="ProteomicsDB" id="253411"/>
<dbReference type="ABCD" id="P97952">
    <property type="antibodies" value="1 sequenced antibody"/>
</dbReference>
<dbReference type="Antibodypedia" id="29258">
    <property type="antibodies" value="207 antibodies from 29 providers"/>
</dbReference>
<dbReference type="DNASU" id="20266"/>
<dbReference type="Ensembl" id="ENSMUST00000098548.8">
    <property type="protein sequence ID" value="ENSMUSP00000096148.5"/>
    <property type="gene ID" value="ENSMUSG00000019194.16"/>
</dbReference>
<dbReference type="Ensembl" id="ENSMUST00000211945.2">
    <property type="protein sequence ID" value="ENSMUSP00000148295.2"/>
    <property type="gene ID" value="ENSMUSG00000019194.16"/>
</dbReference>
<dbReference type="GeneID" id="20266"/>
<dbReference type="KEGG" id="mmu:20266"/>
<dbReference type="UCSC" id="uc009gie.1">
    <property type="organism name" value="mouse"/>
</dbReference>
<dbReference type="AGR" id="MGI:98247"/>
<dbReference type="CTD" id="6324"/>
<dbReference type="MGI" id="MGI:98247">
    <property type="gene designation" value="Scn1b"/>
</dbReference>
<dbReference type="VEuPathDB" id="HostDB:ENSMUSG00000019194"/>
<dbReference type="eggNOG" id="ENOG502R0UM">
    <property type="taxonomic scope" value="Eukaryota"/>
</dbReference>
<dbReference type="GeneTree" id="ENSGT00390000018560"/>
<dbReference type="HOGENOM" id="CLU_096296_0_0_1"/>
<dbReference type="InParanoid" id="P97952"/>
<dbReference type="OMA" id="VWGGCVE"/>
<dbReference type="OrthoDB" id="8868224at2759"/>
<dbReference type="PhylomeDB" id="P97952"/>
<dbReference type="TreeFam" id="TF332097"/>
<dbReference type="BioGRID-ORCS" id="20266">
    <property type="hits" value="1 hit in 83 CRISPR screens"/>
</dbReference>
<dbReference type="PRO" id="PR:P97952"/>
<dbReference type="Proteomes" id="UP000000589">
    <property type="component" value="Chromosome 7"/>
</dbReference>
<dbReference type="RNAct" id="P97952">
    <property type="molecule type" value="protein"/>
</dbReference>
<dbReference type="Bgee" id="ENSMUSG00000019194">
    <property type="expression patterns" value="Expressed in superior frontal gyrus and 162 other cell types or tissues"/>
</dbReference>
<dbReference type="GO" id="GO:0014704">
    <property type="term" value="C:intercalated disc"/>
    <property type="evidence" value="ECO:0000314"/>
    <property type="project" value="MGI"/>
</dbReference>
<dbReference type="GO" id="GO:0033268">
    <property type="term" value="C:node of Ranvier"/>
    <property type="evidence" value="ECO:0000314"/>
    <property type="project" value="MGI"/>
</dbReference>
<dbReference type="GO" id="GO:0043204">
    <property type="term" value="C:perikaryon"/>
    <property type="evidence" value="ECO:0007669"/>
    <property type="project" value="UniProtKB-SubCell"/>
</dbReference>
<dbReference type="GO" id="GO:0005886">
    <property type="term" value="C:plasma membrane"/>
    <property type="evidence" value="ECO:0000250"/>
    <property type="project" value="UniProtKB"/>
</dbReference>
<dbReference type="GO" id="GO:0034706">
    <property type="term" value="C:sodium channel complex"/>
    <property type="evidence" value="ECO:0000353"/>
    <property type="project" value="MGI"/>
</dbReference>
<dbReference type="GO" id="GO:0030315">
    <property type="term" value="C:T-tubule"/>
    <property type="evidence" value="ECO:0000314"/>
    <property type="project" value="MGI"/>
</dbReference>
<dbReference type="GO" id="GO:0001518">
    <property type="term" value="C:voltage-gated sodium channel complex"/>
    <property type="evidence" value="ECO:0000314"/>
    <property type="project" value="ARUK-UCL"/>
</dbReference>
<dbReference type="GO" id="GO:0019871">
    <property type="term" value="F:sodium channel inhibitor activity"/>
    <property type="evidence" value="ECO:0000315"/>
    <property type="project" value="BHF-UCL"/>
</dbReference>
<dbReference type="GO" id="GO:0017080">
    <property type="term" value="F:sodium channel regulator activity"/>
    <property type="evidence" value="ECO:0000250"/>
    <property type="project" value="UniProtKB"/>
</dbReference>
<dbReference type="GO" id="GO:0007411">
    <property type="term" value="P:axon guidance"/>
    <property type="evidence" value="ECO:0000315"/>
    <property type="project" value="MGI"/>
</dbReference>
<dbReference type="GO" id="GO:0061337">
    <property type="term" value="P:cardiac conduction"/>
    <property type="evidence" value="ECO:0000315"/>
    <property type="project" value="BHF-UCL"/>
</dbReference>
<dbReference type="GO" id="GO:0086002">
    <property type="term" value="P:cardiac muscle cell action potential involved in contraction"/>
    <property type="evidence" value="ECO:0007669"/>
    <property type="project" value="Ensembl"/>
</dbReference>
<dbReference type="GO" id="GO:0021966">
    <property type="term" value="P:corticospinal neuron axon guidance"/>
    <property type="evidence" value="ECO:0000315"/>
    <property type="project" value="MGI"/>
</dbReference>
<dbReference type="GO" id="GO:0040011">
    <property type="term" value="P:locomotion"/>
    <property type="evidence" value="ECO:0000315"/>
    <property type="project" value="MGI"/>
</dbReference>
<dbReference type="GO" id="GO:0086012">
    <property type="term" value="P:membrane depolarization during cardiac muscle cell action potential"/>
    <property type="evidence" value="ECO:0000315"/>
    <property type="project" value="BHF-UCL"/>
</dbReference>
<dbReference type="GO" id="GO:0086047">
    <property type="term" value="P:membrane depolarization during Purkinje myocyte cell action potential"/>
    <property type="evidence" value="ECO:0007669"/>
    <property type="project" value="Ensembl"/>
</dbReference>
<dbReference type="GO" id="GO:0031175">
    <property type="term" value="P:neuron projection development"/>
    <property type="evidence" value="ECO:0000316"/>
    <property type="project" value="MGI"/>
</dbReference>
<dbReference type="GO" id="GO:0019227">
    <property type="term" value="P:neuronal action potential propagation"/>
    <property type="evidence" value="ECO:0000315"/>
    <property type="project" value="MGI"/>
</dbReference>
<dbReference type="GO" id="GO:0010976">
    <property type="term" value="P:positive regulation of neuron projection development"/>
    <property type="evidence" value="ECO:0000316"/>
    <property type="project" value="MGI"/>
</dbReference>
<dbReference type="GO" id="GO:1905152">
    <property type="term" value="P:positive regulation of voltage-gated sodium channel activity"/>
    <property type="evidence" value="ECO:0000250"/>
    <property type="project" value="UniProtKB"/>
</dbReference>
<dbReference type="GO" id="GO:0060371">
    <property type="term" value="P:regulation of atrial cardiac muscle cell membrane depolarization"/>
    <property type="evidence" value="ECO:0007669"/>
    <property type="project" value="Ensembl"/>
</dbReference>
<dbReference type="GO" id="GO:0086091">
    <property type="term" value="P:regulation of heart rate by cardiac conduction"/>
    <property type="evidence" value="ECO:0007669"/>
    <property type="project" value="Ensembl"/>
</dbReference>
<dbReference type="GO" id="GO:0002028">
    <property type="term" value="P:regulation of sodium ion transport"/>
    <property type="evidence" value="ECO:0000315"/>
    <property type="project" value="BHF-UCL"/>
</dbReference>
<dbReference type="GO" id="GO:0060307">
    <property type="term" value="P:regulation of ventricular cardiac muscle cell membrane repolarization"/>
    <property type="evidence" value="ECO:0000315"/>
    <property type="project" value="BHF-UCL"/>
</dbReference>
<dbReference type="GO" id="GO:0035725">
    <property type="term" value="P:sodium ion transmembrane transport"/>
    <property type="evidence" value="ECO:0007669"/>
    <property type="project" value="Ensembl"/>
</dbReference>
<dbReference type="FunFam" id="2.60.40.10:FF:000581">
    <property type="entry name" value="sodium channel subunit beta-1"/>
    <property type="match status" value="1"/>
</dbReference>
<dbReference type="Gene3D" id="2.60.40.10">
    <property type="entry name" value="Immunoglobulins"/>
    <property type="match status" value="1"/>
</dbReference>
<dbReference type="InterPro" id="IPR036179">
    <property type="entry name" value="Ig-like_dom_sf"/>
</dbReference>
<dbReference type="InterPro" id="IPR013783">
    <property type="entry name" value="Ig-like_fold"/>
</dbReference>
<dbReference type="InterPro" id="IPR013106">
    <property type="entry name" value="Ig_V-set"/>
</dbReference>
<dbReference type="InterPro" id="IPR027098">
    <property type="entry name" value="Na_channel_b1/b3"/>
</dbReference>
<dbReference type="PANTHER" id="PTHR10546:SF2">
    <property type="entry name" value="SODIUM CHANNEL SUBUNIT BETA-1"/>
    <property type="match status" value="1"/>
</dbReference>
<dbReference type="PANTHER" id="PTHR10546">
    <property type="entry name" value="SODIUM CHANNEL SUBUNIT BETA-1 AND 3"/>
    <property type="match status" value="1"/>
</dbReference>
<dbReference type="Pfam" id="PF07686">
    <property type="entry name" value="V-set"/>
    <property type="match status" value="1"/>
</dbReference>
<dbReference type="SUPFAM" id="SSF48726">
    <property type="entry name" value="Immunoglobulin"/>
    <property type="match status" value="1"/>
</dbReference>
<name>SCN1B_MOUSE</name>
<gene>
    <name evidence="8" type="primary">Scn1b</name>
</gene>
<protein>
    <recommendedName>
        <fullName evidence="2">Sodium channel regulatory subunit beta-1</fullName>
    </recommendedName>
</protein>